<feature type="chain" id="PRO_1000135931" description="2,3-bisphosphoglycerate-dependent phosphoglycerate mutase">
    <location>
        <begin position="1"/>
        <end position="248"/>
    </location>
</feature>
<feature type="active site" description="Tele-phosphohistidine intermediate" evidence="1">
    <location>
        <position position="9"/>
    </location>
</feature>
<feature type="active site" description="Proton donor/acceptor" evidence="1">
    <location>
        <position position="87"/>
    </location>
</feature>
<feature type="binding site" evidence="1">
    <location>
        <begin position="8"/>
        <end position="15"/>
    </location>
    <ligand>
        <name>substrate</name>
    </ligand>
</feature>
<feature type="binding site" evidence="1">
    <location>
        <begin position="21"/>
        <end position="22"/>
    </location>
    <ligand>
        <name>substrate</name>
    </ligand>
</feature>
<feature type="binding site" evidence="1">
    <location>
        <position position="60"/>
    </location>
    <ligand>
        <name>substrate</name>
    </ligand>
</feature>
<feature type="binding site" evidence="1">
    <location>
        <begin position="87"/>
        <end position="90"/>
    </location>
    <ligand>
        <name>substrate</name>
    </ligand>
</feature>
<feature type="binding site" evidence="1">
    <location>
        <position position="98"/>
    </location>
    <ligand>
        <name>substrate</name>
    </ligand>
</feature>
<feature type="binding site" evidence="1">
    <location>
        <begin position="114"/>
        <end position="115"/>
    </location>
    <ligand>
        <name>substrate</name>
    </ligand>
</feature>
<feature type="binding site" evidence="1">
    <location>
        <begin position="183"/>
        <end position="184"/>
    </location>
    <ligand>
        <name>substrate</name>
    </ligand>
</feature>
<feature type="site" description="Transition state stabilizer" evidence="1">
    <location>
        <position position="182"/>
    </location>
</feature>
<reference key="1">
    <citation type="journal article" date="2011" name="J. Bacteriol.">
        <title>Complete genome sequence of the plant growth-promoting endophyte Burkholderia phytofirmans strain PsJN.</title>
        <authorList>
            <person name="Weilharter A."/>
            <person name="Mitter B."/>
            <person name="Shin M.V."/>
            <person name="Chain P.S."/>
            <person name="Nowak J."/>
            <person name="Sessitsch A."/>
        </authorList>
    </citation>
    <scope>NUCLEOTIDE SEQUENCE [LARGE SCALE GENOMIC DNA]</scope>
    <source>
        <strain>DSM 17436 / LMG 22146 / PsJN</strain>
    </source>
</reference>
<proteinExistence type="inferred from homology"/>
<keyword id="KW-0312">Gluconeogenesis</keyword>
<keyword id="KW-0324">Glycolysis</keyword>
<keyword id="KW-0413">Isomerase</keyword>
<gene>
    <name evidence="1" type="primary">gpmA</name>
    <name type="ordered locus">Bphyt_0534</name>
</gene>
<protein>
    <recommendedName>
        <fullName evidence="1">2,3-bisphosphoglycerate-dependent phosphoglycerate mutase</fullName>
        <shortName evidence="1">BPG-dependent PGAM</shortName>
        <shortName evidence="1">PGAM</shortName>
        <shortName evidence="1">Phosphoglyceromutase</shortName>
        <shortName evidence="1">dPGM</shortName>
        <ecNumber evidence="1">5.4.2.11</ecNumber>
    </recommendedName>
</protein>
<dbReference type="EC" id="5.4.2.11" evidence="1"/>
<dbReference type="EMBL" id="CP001052">
    <property type="protein sequence ID" value="ACD14959.1"/>
    <property type="molecule type" value="Genomic_DNA"/>
</dbReference>
<dbReference type="RefSeq" id="WP_012431600.1">
    <property type="nucleotide sequence ID" value="NC_010681.1"/>
</dbReference>
<dbReference type="SMR" id="B2SX15"/>
<dbReference type="STRING" id="398527.Bphyt_0534"/>
<dbReference type="GeneID" id="97305897"/>
<dbReference type="KEGG" id="bpy:Bphyt_0534"/>
<dbReference type="eggNOG" id="COG0588">
    <property type="taxonomic scope" value="Bacteria"/>
</dbReference>
<dbReference type="HOGENOM" id="CLU_033323_1_1_4"/>
<dbReference type="OrthoDB" id="9781415at2"/>
<dbReference type="UniPathway" id="UPA00109">
    <property type="reaction ID" value="UER00186"/>
</dbReference>
<dbReference type="Proteomes" id="UP000001739">
    <property type="component" value="Chromosome 1"/>
</dbReference>
<dbReference type="GO" id="GO:0004619">
    <property type="term" value="F:phosphoglycerate mutase activity"/>
    <property type="evidence" value="ECO:0007669"/>
    <property type="project" value="UniProtKB-EC"/>
</dbReference>
<dbReference type="GO" id="GO:0006094">
    <property type="term" value="P:gluconeogenesis"/>
    <property type="evidence" value="ECO:0007669"/>
    <property type="project" value="UniProtKB-UniRule"/>
</dbReference>
<dbReference type="GO" id="GO:0006096">
    <property type="term" value="P:glycolytic process"/>
    <property type="evidence" value="ECO:0007669"/>
    <property type="project" value="UniProtKB-UniRule"/>
</dbReference>
<dbReference type="CDD" id="cd07067">
    <property type="entry name" value="HP_PGM_like"/>
    <property type="match status" value="1"/>
</dbReference>
<dbReference type="FunFam" id="3.40.50.1240:FF:000003">
    <property type="entry name" value="2,3-bisphosphoglycerate-dependent phosphoglycerate mutase"/>
    <property type="match status" value="1"/>
</dbReference>
<dbReference type="Gene3D" id="3.40.50.1240">
    <property type="entry name" value="Phosphoglycerate mutase-like"/>
    <property type="match status" value="1"/>
</dbReference>
<dbReference type="HAMAP" id="MF_01039">
    <property type="entry name" value="PGAM_GpmA"/>
    <property type="match status" value="1"/>
</dbReference>
<dbReference type="InterPro" id="IPR013078">
    <property type="entry name" value="His_Pase_superF_clade-1"/>
</dbReference>
<dbReference type="InterPro" id="IPR029033">
    <property type="entry name" value="His_PPase_superfam"/>
</dbReference>
<dbReference type="InterPro" id="IPR001345">
    <property type="entry name" value="PG/BPGM_mutase_AS"/>
</dbReference>
<dbReference type="InterPro" id="IPR005952">
    <property type="entry name" value="Phosphogly_mut1"/>
</dbReference>
<dbReference type="NCBIfam" id="TIGR01258">
    <property type="entry name" value="pgm_1"/>
    <property type="match status" value="1"/>
</dbReference>
<dbReference type="NCBIfam" id="NF010713">
    <property type="entry name" value="PRK14115.1"/>
    <property type="match status" value="1"/>
</dbReference>
<dbReference type="PANTHER" id="PTHR11931">
    <property type="entry name" value="PHOSPHOGLYCERATE MUTASE"/>
    <property type="match status" value="1"/>
</dbReference>
<dbReference type="Pfam" id="PF00300">
    <property type="entry name" value="His_Phos_1"/>
    <property type="match status" value="2"/>
</dbReference>
<dbReference type="PIRSF" id="PIRSF000709">
    <property type="entry name" value="6PFK_2-Ptase"/>
    <property type="match status" value="1"/>
</dbReference>
<dbReference type="SMART" id="SM00855">
    <property type="entry name" value="PGAM"/>
    <property type="match status" value="1"/>
</dbReference>
<dbReference type="SUPFAM" id="SSF53254">
    <property type="entry name" value="Phosphoglycerate mutase-like"/>
    <property type="match status" value="1"/>
</dbReference>
<dbReference type="PROSITE" id="PS00175">
    <property type="entry name" value="PG_MUTASE"/>
    <property type="match status" value="1"/>
</dbReference>
<organism>
    <name type="scientific">Paraburkholderia phytofirmans (strain DSM 17436 / LMG 22146 / PsJN)</name>
    <name type="common">Burkholderia phytofirmans</name>
    <dbReference type="NCBI Taxonomy" id="398527"/>
    <lineage>
        <taxon>Bacteria</taxon>
        <taxon>Pseudomonadati</taxon>
        <taxon>Pseudomonadota</taxon>
        <taxon>Betaproteobacteria</taxon>
        <taxon>Burkholderiales</taxon>
        <taxon>Burkholderiaceae</taxon>
        <taxon>Paraburkholderia</taxon>
    </lineage>
</organism>
<name>GPMA_PARPJ</name>
<accession>B2SX15</accession>
<sequence length="248" mass="27938">MYKLVLIRHGESTWNKENRFTGWVDVDLTEQGNNEAQQAGVLLKESGYTFDIAYTSVLKRAIRTLWHVQDKMDLMYLPVVHSWRLNERHYGALSGLNKAETAAKFGDEQVLVWRRSYDTPPPALEPTDDRAPYNDPRYAKVPREQLPLTECLKDTVARVLPLWNESIAPAIKSGRKVVIAAHGNSIRALVKYLDNISDDDIVGLNIPNGVPLVYELDEDLKPIKHYYLGDQEAIAKAQAAVAKQGKAG</sequence>
<comment type="function">
    <text evidence="1">Catalyzes the interconversion of 2-phosphoglycerate and 3-phosphoglycerate.</text>
</comment>
<comment type="catalytic activity">
    <reaction evidence="1">
        <text>(2R)-2-phosphoglycerate = (2R)-3-phosphoglycerate</text>
        <dbReference type="Rhea" id="RHEA:15901"/>
        <dbReference type="ChEBI" id="CHEBI:58272"/>
        <dbReference type="ChEBI" id="CHEBI:58289"/>
        <dbReference type="EC" id="5.4.2.11"/>
    </reaction>
</comment>
<comment type="pathway">
    <text evidence="1">Carbohydrate degradation; glycolysis; pyruvate from D-glyceraldehyde 3-phosphate: step 3/5.</text>
</comment>
<comment type="subunit">
    <text evidence="1">Homodimer.</text>
</comment>
<comment type="similarity">
    <text evidence="1">Belongs to the phosphoglycerate mutase family. BPG-dependent PGAM subfamily.</text>
</comment>
<evidence type="ECO:0000255" key="1">
    <source>
        <dbReference type="HAMAP-Rule" id="MF_01039"/>
    </source>
</evidence>